<accession>B5QXI2</accession>
<dbReference type="EC" id="2.1.2.10" evidence="1"/>
<dbReference type="EMBL" id="AM933172">
    <property type="protein sequence ID" value="CAR34476.1"/>
    <property type="molecule type" value="Genomic_DNA"/>
</dbReference>
<dbReference type="RefSeq" id="WP_000068731.1">
    <property type="nucleotide sequence ID" value="NC_011294.1"/>
</dbReference>
<dbReference type="SMR" id="B5QXI2"/>
<dbReference type="KEGG" id="set:SEN2898"/>
<dbReference type="HOGENOM" id="CLU_007884_10_2_6"/>
<dbReference type="Proteomes" id="UP000000613">
    <property type="component" value="Chromosome"/>
</dbReference>
<dbReference type="GO" id="GO:0005829">
    <property type="term" value="C:cytosol"/>
    <property type="evidence" value="ECO:0007669"/>
    <property type="project" value="TreeGrafter"/>
</dbReference>
<dbReference type="GO" id="GO:0005960">
    <property type="term" value="C:glycine cleavage complex"/>
    <property type="evidence" value="ECO:0007669"/>
    <property type="project" value="InterPro"/>
</dbReference>
<dbReference type="GO" id="GO:0004047">
    <property type="term" value="F:aminomethyltransferase activity"/>
    <property type="evidence" value="ECO:0007669"/>
    <property type="project" value="UniProtKB-UniRule"/>
</dbReference>
<dbReference type="GO" id="GO:0008483">
    <property type="term" value="F:transaminase activity"/>
    <property type="evidence" value="ECO:0007669"/>
    <property type="project" value="UniProtKB-KW"/>
</dbReference>
<dbReference type="GO" id="GO:0019464">
    <property type="term" value="P:glycine decarboxylation via glycine cleavage system"/>
    <property type="evidence" value="ECO:0007669"/>
    <property type="project" value="UniProtKB-UniRule"/>
</dbReference>
<dbReference type="FunFam" id="2.40.30.110:FF:000001">
    <property type="entry name" value="Aminomethyltransferase"/>
    <property type="match status" value="1"/>
</dbReference>
<dbReference type="FunFam" id="3.30.70.1400:FF:000001">
    <property type="entry name" value="Aminomethyltransferase"/>
    <property type="match status" value="1"/>
</dbReference>
<dbReference type="FunFam" id="4.10.1250.10:FF:000001">
    <property type="entry name" value="Aminomethyltransferase"/>
    <property type="match status" value="1"/>
</dbReference>
<dbReference type="Gene3D" id="2.40.30.110">
    <property type="entry name" value="Aminomethyltransferase beta-barrel domains"/>
    <property type="match status" value="1"/>
</dbReference>
<dbReference type="Gene3D" id="3.30.70.1400">
    <property type="entry name" value="Aminomethyltransferase beta-barrel domains"/>
    <property type="match status" value="1"/>
</dbReference>
<dbReference type="Gene3D" id="4.10.1250.10">
    <property type="entry name" value="Aminomethyltransferase fragment"/>
    <property type="match status" value="1"/>
</dbReference>
<dbReference type="Gene3D" id="3.30.1360.120">
    <property type="entry name" value="Probable tRNA modification gtpase trme, domain 1"/>
    <property type="match status" value="1"/>
</dbReference>
<dbReference type="HAMAP" id="MF_00259">
    <property type="entry name" value="GcvT"/>
    <property type="match status" value="1"/>
</dbReference>
<dbReference type="InterPro" id="IPR006223">
    <property type="entry name" value="GCS_T"/>
</dbReference>
<dbReference type="InterPro" id="IPR022903">
    <property type="entry name" value="GCS_T_bac"/>
</dbReference>
<dbReference type="InterPro" id="IPR013977">
    <property type="entry name" value="GCST_C"/>
</dbReference>
<dbReference type="InterPro" id="IPR006222">
    <property type="entry name" value="GCV_T_N"/>
</dbReference>
<dbReference type="InterPro" id="IPR028896">
    <property type="entry name" value="GcvT/YgfZ/DmdA"/>
</dbReference>
<dbReference type="InterPro" id="IPR029043">
    <property type="entry name" value="GcvT/YgfZ_C"/>
</dbReference>
<dbReference type="InterPro" id="IPR027266">
    <property type="entry name" value="TrmE/GcvT_dom1"/>
</dbReference>
<dbReference type="NCBIfam" id="TIGR00528">
    <property type="entry name" value="gcvT"/>
    <property type="match status" value="1"/>
</dbReference>
<dbReference type="NCBIfam" id="NF001567">
    <property type="entry name" value="PRK00389.1"/>
    <property type="match status" value="1"/>
</dbReference>
<dbReference type="PANTHER" id="PTHR43757">
    <property type="entry name" value="AMINOMETHYLTRANSFERASE"/>
    <property type="match status" value="1"/>
</dbReference>
<dbReference type="PANTHER" id="PTHR43757:SF2">
    <property type="entry name" value="AMINOMETHYLTRANSFERASE, MITOCHONDRIAL"/>
    <property type="match status" value="1"/>
</dbReference>
<dbReference type="Pfam" id="PF01571">
    <property type="entry name" value="GCV_T"/>
    <property type="match status" value="1"/>
</dbReference>
<dbReference type="Pfam" id="PF08669">
    <property type="entry name" value="GCV_T_C"/>
    <property type="match status" value="1"/>
</dbReference>
<dbReference type="PIRSF" id="PIRSF006487">
    <property type="entry name" value="GcvT"/>
    <property type="match status" value="1"/>
</dbReference>
<dbReference type="SUPFAM" id="SSF101790">
    <property type="entry name" value="Aminomethyltransferase beta-barrel domain"/>
    <property type="match status" value="1"/>
</dbReference>
<dbReference type="SUPFAM" id="SSF103025">
    <property type="entry name" value="Folate-binding domain"/>
    <property type="match status" value="1"/>
</dbReference>
<keyword id="KW-0032">Aminotransferase</keyword>
<keyword id="KW-0808">Transferase</keyword>
<proteinExistence type="inferred from homology"/>
<name>GCST_SALEP</name>
<reference key="1">
    <citation type="journal article" date="2008" name="Genome Res.">
        <title>Comparative genome analysis of Salmonella enteritidis PT4 and Salmonella gallinarum 287/91 provides insights into evolutionary and host adaptation pathways.</title>
        <authorList>
            <person name="Thomson N.R."/>
            <person name="Clayton D.J."/>
            <person name="Windhorst D."/>
            <person name="Vernikos G."/>
            <person name="Davidson S."/>
            <person name="Churcher C."/>
            <person name="Quail M.A."/>
            <person name="Stevens M."/>
            <person name="Jones M.A."/>
            <person name="Watson M."/>
            <person name="Barron A."/>
            <person name="Layton A."/>
            <person name="Pickard D."/>
            <person name="Kingsley R.A."/>
            <person name="Bignell A."/>
            <person name="Clark L."/>
            <person name="Harris B."/>
            <person name="Ormond D."/>
            <person name="Abdellah Z."/>
            <person name="Brooks K."/>
            <person name="Cherevach I."/>
            <person name="Chillingworth T."/>
            <person name="Woodward J."/>
            <person name="Norberczak H."/>
            <person name="Lord A."/>
            <person name="Arrowsmith C."/>
            <person name="Jagels K."/>
            <person name="Moule S."/>
            <person name="Mungall K."/>
            <person name="Saunders M."/>
            <person name="Whitehead S."/>
            <person name="Chabalgoity J.A."/>
            <person name="Maskell D."/>
            <person name="Humphreys T."/>
            <person name="Roberts M."/>
            <person name="Barrow P.A."/>
            <person name="Dougan G."/>
            <person name="Parkhill J."/>
        </authorList>
    </citation>
    <scope>NUCLEOTIDE SEQUENCE [LARGE SCALE GENOMIC DNA]</scope>
    <source>
        <strain>P125109</strain>
    </source>
</reference>
<feature type="chain" id="PRO_1000114111" description="Aminomethyltransferase">
    <location>
        <begin position="1"/>
        <end position="364"/>
    </location>
</feature>
<comment type="function">
    <text evidence="1">The glycine cleavage system catalyzes the degradation of glycine.</text>
</comment>
<comment type="catalytic activity">
    <reaction evidence="1">
        <text>N(6)-[(R)-S(8)-aminomethyldihydrolipoyl]-L-lysyl-[protein] + (6S)-5,6,7,8-tetrahydrofolate = N(6)-[(R)-dihydrolipoyl]-L-lysyl-[protein] + (6R)-5,10-methylene-5,6,7,8-tetrahydrofolate + NH4(+)</text>
        <dbReference type="Rhea" id="RHEA:16945"/>
        <dbReference type="Rhea" id="RHEA-COMP:10475"/>
        <dbReference type="Rhea" id="RHEA-COMP:10492"/>
        <dbReference type="ChEBI" id="CHEBI:15636"/>
        <dbReference type="ChEBI" id="CHEBI:28938"/>
        <dbReference type="ChEBI" id="CHEBI:57453"/>
        <dbReference type="ChEBI" id="CHEBI:83100"/>
        <dbReference type="ChEBI" id="CHEBI:83143"/>
        <dbReference type="EC" id="2.1.2.10"/>
    </reaction>
</comment>
<comment type="subunit">
    <text evidence="1">The glycine cleavage system is composed of four proteins: P, T, L and H.</text>
</comment>
<comment type="similarity">
    <text evidence="1">Belongs to the GcvT family.</text>
</comment>
<sequence>MAQQTPLYEQHTLCGARMVDFHGWMMPLHYGSQLDEHHAVRTDAGMFDVSHMTIVDLHGSRTREFLRYLLANDVAKLTKTGKALYSGMLNASGGVIDDLIIYYFTEDFFRLVVNSATREKDLSWITQHAEPYAIDITVRDDLSLIAVQGPNAQEKAATLFTDEQRHAVEGMKPFFGVQVGDLFIATTGYTGEAGYEIAMPNEKAADFWRALVEAGVKPCGLGARDTLRLEAGMNLYGQEMDEGISPLAANMGWTIAWEPADRDFIGREALEMQREKGHEQLVGLVMTEKGVLRNELPVRFTDAQGNQQEGIITSGTFSPTLGYSIALARVPAGIGETAIVQIRNREMPVKVTKPVFVRNGKAVA</sequence>
<organism>
    <name type="scientific">Salmonella enteritidis PT4 (strain P125109)</name>
    <dbReference type="NCBI Taxonomy" id="550537"/>
    <lineage>
        <taxon>Bacteria</taxon>
        <taxon>Pseudomonadati</taxon>
        <taxon>Pseudomonadota</taxon>
        <taxon>Gammaproteobacteria</taxon>
        <taxon>Enterobacterales</taxon>
        <taxon>Enterobacteriaceae</taxon>
        <taxon>Salmonella</taxon>
    </lineage>
</organism>
<protein>
    <recommendedName>
        <fullName evidence="1">Aminomethyltransferase</fullName>
        <ecNumber evidence="1">2.1.2.10</ecNumber>
    </recommendedName>
    <alternativeName>
        <fullName evidence="1">Glycine cleavage system T protein</fullName>
    </alternativeName>
</protein>
<evidence type="ECO:0000255" key="1">
    <source>
        <dbReference type="HAMAP-Rule" id="MF_00259"/>
    </source>
</evidence>
<gene>
    <name evidence="1" type="primary">gcvT</name>
    <name type="ordered locus">SEN2898</name>
</gene>